<sequence>MILGVGTDIVYIPRISNLWKKFGIKFLTRVFNQKEIEDSYKYTNFDAQVRHFAKRFAAKEAYVKALGTGFGQSIKMSDIVILNNPYGKPQITVSNSNPIHKIELSISDEKDYAIAFIVIYNANIKL</sequence>
<keyword id="KW-0963">Cytoplasm</keyword>
<keyword id="KW-0275">Fatty acid biosynthesis</keyword>
<keyword id="KW-0276">Fatty acid metabolism</keyword>
<keyword id="KW-0444">Lipid biosynthesis</keyword>
<keyword id="KW-0443">Lipid metabolism</keyword>
<keyword id="KW-0460">Magnesium</keyword>
<keyword id="KW-0479">Metal-binding</keyword>
<keyword id="KW-0808">Transferase</keyword>
<feature type="chain" id="PRO_0000228285" description="Holo-[acyl-carrier-protein] synthase">
    <location>
        <begin position="1"/>
        <end position="126"/>
    </location>
</feature>
<feature type="binding site" evidence="1">
    <location>
        <position position="8"/>
    </location>
    <ligand>
        <name>Mg(2+)</name>
        <dbReference type="ChEBI" id="CHEBI:18420"/>
    </ligand>
</feature>
<feature type="binding site" evidence="1">
    <location>
        <position position="60"/>
    </location>
    <ligand>
        <name>Mg(2+)</name>
        <dbReference type="ChEBI" id="CHEBI:18420"/>
    </ligand>
</feature>
<accession>Q3YSD5</accession>
<reference key="1">
    <citation type="journal article" date="2006" name="J. Bacteriol.">
        <title>The genome of the obligately intracellular bacterium Ehrlichia canis reveals themes of complex membrane structure and immune evasion strategies.</title>
        <authorList>
            <person name="Mavromatis K."/>
            <person name="Doyle C.K."/>
            <person name="Lykidis A."/>
            <person name="Ivanova N."/>
            <person name="Francino M.P."/>
            <person name="Chain P."/>
            <person name="Shin M."/>
            <person name="Malfatti S."/>
            <person name="Larimer F."/>
            <person name="Copeland A."/>
            <person name="Detter J.C."/>
            <person name="Land M."/>
            <person name="Richardson P.M."/>
            <person name="Yu X.J."/>
            <person name="Walker D.H."/>
            <person name="McBride J.W."/>
            <person name="Kyrpides N.C."/>
        </authorList>
    </citation>
    <scope>NUCLEOTIDE SEQUENCE [LARGE SCALE GENOMIC DNA]</scope>
    <source>
        <strain>Jake</strain>
    </source>
</reference>
<name>ACPS_EHRCJ</name>
<protein>
    <recommendedName>
        <fullName evidence="1">Holo-[acyl-carrier-protein] synthase</fullName>
        <shortName evidence="1">Holo-ACP synthase</shortName>
        <ecNumber evidence="1">2.7.8.7</ecNumber>
    </recommendedName>
    <alternativeName>
        <fullName evidence="1">4'-phosphopantetheinyl transferase AcpS</fullName>
    </alternativeName>
</protein>
<proteinExistence type="inferred from homology"/>
<organism>
    <name type="scientific">Ehrlichia canis (strain Jake)</name>
    <dbReference type="NCBI Taxonomy" id="269484"/>
    <lineage>
        <taxon>Bacteria</taxon>
        <taxon>Pseudomonadati</taxon>
        <taxon>Pseudomonadota</taxon>
        <taxon>Alphaproteobacteria</taxon>
        <taxon>Rickettsiales</taxon>
        <taxon>Anaplasmataceae</taxon>
        <taxon>Ehrlichia</taxon>
    </lineage>
</organism>
<gene>
    <name evidence="1" type="primary">acpS</name>
    <name type="ordered locus">Ecaj_0326</name>
</gene>
<comment type="function">
    <text evidence="1">Transfers the 4'-phosphopantetheine moiety from coenzyme A to a Ser of acyl-carrier-protein.</text>
</comment>
<comment type="catalytic activity">
    <reaction evidence="1">
        <text>apo-[ACP] + CoA = holo-[ACP] + adenosine 3',5'-bisphosphate + H(+)</text>
        <dbReference type="Rhea" id="RHEA:12068"/>
        <dbReference type="Rhea" id="RHEA-COMP:9685"/>
        <dbReference type="Rhea" id="RHEA-COMP:9690"/>
        <dbReference type="ChEBI" id="CHEBI:15378"/>
        <dbReference type="ChEBI" id="CHEBI:29999"/>
        <dbReference type="ChEBI" id="CHEBI:57287"/>
        <dbReference type="ChEBI" id="CHEBI:58343"/>
        <dbReference type="ChEBI" id="CHEBI:64479"/>
        <dbReference type="EC" id="2.7.8.7"/>
    </reaction>
</comment>
<comment type="cofactor">
    <cofactor evidence="1">
        <name>Mg(2+)</name>
        <dbReference type="ChEBI" id="CHEBI:18420"/>
    </cofactor>
</comment>
<comment type="subcellular location">
    <subcellularLocation>
        <location evidence="1">Cytoplasm</location>
    </subcellularLocation>
</comment>
<comment type="similarity">
    <text evidence="1">Belongs to the P-Pant transferase superfamily. AcpS family.</text>
</comment>
<evidence type="ECO:0000255" key="1">
    <source>
        <dbReference type="HAMAP-Rule" id="MF_00101"/>
    </source>
</evidence>
<dbReference type="EC" id="2.7.8.7" evidence="1"/>
<dbReference type="EMBL" id="CP000107">
    <property type="protein sequence ID" value="AAZ68370.1"/>
    <property type="molecule type" value="Genomic_DNA"/>
</dbReference>
<dbReference type="RefSeq" id="WP_011304448.1">
    <property type="nucleotide sequence ID" value="NC_007354.1"/>
</dbReference>
<dbReference type="SMR" id="Q3YSD5"/>
<dbReference type="FunCoup" id="Q3YSD5">
    <property type="interactions" value="82"/>
</dbReference>
<dbReference type="STRING" id="269484.Ecaj_0326"/>
<dbReference type="KEGG" id="ecn:Ecaj_0326"/>
<dbReference type="eggNOG" id="COG0736">
    <property type="taxonomic scope" value="Bacteria"/>
</dbReference>
<dbReference type="HOGENOM" id="CLU_089696_1_2_5"/>
<dbReference type="InParanoid" id="Q3YSD5"/>
<dbReference type="Proteomes" id="UP000000435">
    <property type="component" value="Chromosome"/>
</dbReference>
<dbReference type="GO" id="GO:0005829">
    <property type="term" value="C:cytosol"/>
    <property type="evidence" value="ECO:0007669"/>
    <property type="project" value="TreeGrafter"/>
</dbReference>
<dbReference type="GO" id="GO:0008897">
    <property type="term" value="F:holo-[acyl-carrier-protein] synthase activity"/>
    <property type="evidence" value="ECO:0007669"/>
    <property type="project" value="UniProtKB-UniRule"/>
</dbReference>
<dbReference type="GO" id="GO:0000287">
    <property type="term" value="F:magnesium ion binding"/>
    <property type="evidence" value="ECO:0007669"/>
    <property type="project" value="UniProtKB-UniRule"/>
</dbReference>
<dbReference type="GO" id="GO:0006633">
    <property type="term" value="P:fatty acid biosynthetic process"/>
    <property type="evidence" value="ECO:0007669"/>
    <property type="project" value="UniProtKB-UniRule"/>
</dbReference>
<dbReference type="GO" id="GO:0019878">
    <property type="term" value="P:lysine biosynthetic process via aminoadipic acid"/>
    <property type="evidence" value="ECO:0007669"/>
    <property type="project" value="TreeGrafter"/>
</dbReference>
<dbReference type="Gene3D" id="3.90.470.20">
    <property type="entry name" value="4'-phosphopantetheinyl transferase domain"/>
    <property type="match status" value="1"/>
</dbReference>
<dbReference type="HAMAP" id="MF_00101">
    <property type="entry name" value="AcpS"/>
    <property type="match status" value="1"/>
</dbReference>
<dbReference type="InterPro" id="IPR008278">
    <property type="entry name" value="4-PPantetheinyl_Trfase_dom"/>
</dbReference>
<dbReference type="InterPro" id="IPR037143">
    <property type="entry name" value="4-PPantetheinyl_Trfase_dom_sf"/>
</dbReference>
<dbReference type="InterPro" id="IPR002582">
    <property type="entry name" value="ACPS"/>
</dbReference>
<dbReference type="InterPro" id="IPR050559">
    <property type="entry name" value="P-Pant_transferase_sf"/>
</dbReference>
<dbReference type="InterPro" id="IPR004568">
    <property type="entry name" value="Ppantetheine-prot_Trfase_dom"/>
</dbReference>
<dbReference type="NCBIfam" id="TIGR00516">
    <property type="entry name" value="acpS"/>
    <property type="match status" value="1"/>
</dbReference>
<dbReference type="NCBIfam" id="TIGR00556">
    <property type="entry name" value="pantethn_trn"/>
    <property type="match status" value="1"/>
</dbReference>
<dbReference type="NCBIfam" id="NF011253">
    <property type="entry name" value="PRK14659.1"/>
    <property type="match status" value="1"/>
</dbReference>
<dbReference type="PANTHER" id="PTHR12215:SF15">
    <property type="entry name" value="4'-PHOSPHOPANTETHEINYL TRANSFERASE SUPERFAMILY-RELATED"/>
    <property type="match status" value="1"/>
</dbReference>
<dbReference type="PANTHER" id="PTHR12215">
    <property type="entry name" value="PHOSPHOPANTETHEINE TRANSFERASE"/>
    <property type="match status" value="1"/>
</dbReference>
<dbReference type="Pfam" id="PF01648">
    <property type="entry name" value="ACPS"/>
    <property type="match status" value="1"/>
</dbReference>
<dbReference type="SUPFAM" id="SSF56214">
    <property type="entry name" value="4'-phosphopantetheinyl transferase"/>
    <property type="match status" value="1"/>
</dbReference>